<feature type="chain" id="PRO_1000077143" description="ATP-dependent Clp protease ATP-binding subunit ClpX">
    <location>
        <begin position="1"/>
        <end position="419"/>
    </location>
</feature>
<feature type="domain" description="ClpX-type ZB" evidence="2">
    <location>
        <begin position="1"/>
        <end position="54"/>
    </location>
</feature>
<feature type="binding site" evidence="2">
    <location>
        <position position="13"/>
    </location>
    <ligand>
        <name>Zn(2+)</name>
        <dbReference type="ChEBI" id="CHEBI:29105"/>
    </ligand>
</feature>
<feature type="binding site" evidence="2">
    <location>
        <position position="16"/>
    </location>
    <ligand>
        <name>Zn(2+)</name>
        <dbReference type="ChEBI" id="CHEBI:29105"/>
    </ligand>
</feature>
<feature type="binding site" evidence="2">
    <location>
        <position position="35"/>
    </location>
    <ligand>
        <name>Zn(2+)</name>
        <dbReference type="ChEBI" id="CHEBI:29105"/>
    </ligand>
</feature>
<feature type="binding site" evidence="2">
    <location>
        <position position="38"/>
    </location>
    <ligand>
        <name>Zn(2+)</name>
        <dbReference type="ChEBI" id="CHEBI:29105"/>
    </ligand>
</feature>
<feature type="binding site" evidence="1">
    <location>
        <begin position="117"/>
        <end position="124"/>
    </location>
    <ligand>
        <name>ATP</name>
        <dbReference type="ChEBI" id="CHEBI:30616"/>
    </ligand>
</feature>
<keyword id="KW-0067">ATP-binding</keyword>
<keyword id="KW-0143">Chaperone</keyword>
<keyword id="KW-0479">Metal-binding</keyword>
<keyword id="KW-0547">Nucleotide-binding</keyword>
<keyword id="KW-0862">Zinc</keyword>
<accession>A7GTF1</accession>
<evidence type="ECO:0000255" key="1">
    <source>
        <dbReference type="HAMAP-Rule" id="MF_00175"/>
    </source>
</evidence>
<evidence type="ECO:0000255" key="2">
    <source>
        <dbReference type="PROSITE-ProRule" id="PRU01250"/>
    </source>
</evidence>
<name>CLPX_BACCN</name>
<sequence length="419" mass="46266">MFKFNDEKGQLKCSFCGKTQTQVRKLVAGPGVYICDECIELCTEIVQEELAKDEEVEFKDVPKPIEIREILDEYVIGQDNAKKALAVAVYNHYKRINSNSKIDDVELAKSNIALIGPTGSGKTLLAQTLARILNVPFAIADATSLTEAGYVGEDVENILLKLIQAADYDVEKAEKGIIYIDEIDKVARKSENPSITRDVSGEGVQQALLKILEGTVASVPPQGGRKHPHQEFIQIDTTNILFICGGAFDGIEPIIKRRLGEKVIGFGSEKKNAEVNEKHVLSHVLPEDLLRFGLIPEFIGRLPVIANLEPLDEDALVDILTKPKNALVKQFQKLLELDDVELEFEEGALIEIAKKAIERKTGARGLRSIIEGLMLDVMFELPSRKDIEKCILTRETVANNAPPKLVLQDGTVLDTKTSA</sequence>
<comment type="function">
    <text evidence="1">ATP-dependent specificity component of the Clp protease. It directs the protease to specific substrates. Can perform chaperone functions in the absence of ClpP.</text>
</comment>
<comment type="subunit">
    <text evidence="1">Component of the ClpX-ClpP complex. Forms a hexameric ring that, in the presence of ATP, binds to fourteen ClpP subunits assembled into a disk-like structure with a central cavity, resembling the structure of eukaryotic proteasomes.</text>
</comment>
<comment type="similarity">
    <text evidence="1">Belongs to the ClpX chaperone family.</text>
</comment>
<protein>
    <recommendedName>
        <fullName evidence="1">ATP-dependent Clp protease ATP-binding subunit ClpX</fullName>
    </recommendedName>
</protein>
<proteinExistence type="inferred from homology"/>
<reference key="1">
    <citation type="journal article" date="2008" name="Chem. Biol. Interact.">
        <title>Extending the Bacillus cereus group genomics to putative food-borne pathogens of different toxicity.</title>
        <authorList>
            <person name="Lapidus A."/>
            <person name="Goltsman E."/>
            <person name="Auger S."/>
            <person name="Galleron N."/>
            <person name="Segurens B."/>
            <person name="Dossat C."/>
            <person name="Land M.L."/>
            <person name="Broussolle V."/>
            <person name="Brillard J."/>
            <person name="Guinebretiere M.-H."/>
            <person name="Sanchis V."/>
            <person name="Nguen-the C."/>
            <person name="Lereclus D."/>
            <person name="Richardson P."/>
            <person name="Wincker P."/>
            <person name="Weissenbach J."/>
            <person name="Ehrlich S.D."/>
            <person name="Sorokin A."/>
        </authorList>
    </citation>
    <scope>NUCLEOTIDE SEQUENCE [LARGE SCALE GENOMIC DNA]</scope>
    <source>
        <strain>DSM 22905 / CIP 110041 / 391-98 / NVH 391-98</strain>
    </source>
</reference>
<organism>
    <name type="scientific">Bacillus cytotoxicus (strain DSM 22905 / CIP 110041 / 391-98 / NVH 391-98)</name>
    <dbReference type="NCBI Taxonomy" id="315749"/>
    <lineage>
        <taxon>Bacteria</taxon>
        <taxon>Bacillati</taxon>
        <taxon>Bacillota</taxon>
        <taxon>Bacilli</taxon>
        <taxon>Bacillales</taxon>
        <taxon>Bacillaceae</taxon>
        <taxon>Bacillus</taxon>
        <taxon>Bacillus cereus group</taxon>
    </lineage>
</organism>
<gene>
    <name evidence="1" type="primary">clpX</name>
    <name type="ordered locus">Bcer98_3186</name>
</gene>
<dbReference type="EMBL" id="CP000764">
    <property type="protein sequence ID" value="ABS23409.1"/>
    <property type="molecule type" value="Genomic_DNA"/>
</dbReference>
<dbReference type="RefSeq" id="WP_012095645.1">
    <property type="nucleotide sequence ID" value="NC_009674.1"/>
</dbReference>
<dbReference type="SMR" id="A7GTF1"/>
<dbReference type="STRING" id="315749.Bcer98_3186"/>
<dbReference type="GeneID" id="33898435"/>
<dbReference type="KEGG" id="bcy:Bcer98_3186"/>
<dbReference type="eggNOG" id="COG1219">
    <property type="taxonomic scope" value="Bacteria"/>
</dbReference>
<dbReference type="HOGENOM" id="CLU_014218_8_2_9"/>
<dbReference type="OrthoDB" id="9804062at2"/>
<dbReference type="Proteomes" id="UP000002300">
    <property type="component" value="Chromosome"/>
</dbReference>
<dbReference type="GO" id="GO:0009376">
    <property type="term" value="C:HslUV protease complex"/>
    <property type="evidence" value="ECO:0007669"/>
    <property type="project" value="TreeGrafter"/>
</dbReference>
<dbReference type="GO" id="GO:0005524">
    <property type="term" value="F:ATP binding"/>
    <property type="evidence" value="ECO:0007669"/>
    <property type="project" value="UniProtKB-UniRule"/>
</dbReference>
<dbReference type="GO" id="GO:0016887">
    <property type="term" value="F:ATP hydrolysis activity"/>
    <property type="evidence" value="ECO:0007669"/>
    <property type="project" value="InterPro"/>
</dbReference>
<dbReference type="GO" id="GO:0140662">
    <property type="term" value="F:ATP-dependent protein folding chaperone"/>
    <property type="evidence" value="ECO:0007669"/>
    <property type="project" value="InterPro"/>
</dbReference>
<dbReference type="GO" id="GO:0046983">
    <property type="term" value="F:protein dimerization activity"/>
    <property type="evidence" value="ECO:0007669"/>
    <property type="project" value="InterPro"/>
</dbReference>
<dbReference type="GO" id="GO:0051082">
    <property type="term" value="F:unfolded protein binding"/>
    <property type="evidence" value="ECO:0007669"/>
    <property type="project" value="UniProtKB-UniRule"/>
</dbReference>
<dbReference type="GO" id="GO:0008270">
    <property type="term" value="F:zinc ion binding"/>
    <property type="evidence" value="ECO:0007669"/>
    <property type="project" value="InterPro"/>
</dbReference>
<dbReference type="GO" id="GO:0051301">
    <property type="term" value="P:cell division"/>
    <property type="evidence" value="ECO:0007669"/>
    <property type="project" value="TreeGrafter"/>
</dbReference>
<dbReference type="GO" id="GO:0051603">
    <property type="term" value="P:proteolysis involved in protein catabolic process"/>
    <property type="evidence" value="ECO:0007669"/>
    <property type="project" value="TreeGrafter"/>
</dbReference>
<dbReference type="CDD" id="cd19497">
    <property type="entry name" value="RecA-like_ClpX"/>
    <property type="match status" value="1"/>
</dbReference>
<dbReference type="FunFam" id="1.10.8.60:FF:000002">
    <property type="entry name" value="ATP-dependent Clp protease ATP-binding subunit ClpX"/>
    <property type="match status" value="1"/>
</dbReference>
<dbReference type="FunFam" id="3.40.50.300:FF:000005">
    <property type="entry name" value="ATP-dependent Clp protease ATP-binding subunit ClpX"/>
    <property type="match status" value="1"/>
</dbReference>
<dbReference type="Gene3D" id="1.10.8.60">
    <property type="match status" value="1"/>
</dbReference>
<dbReference type="Gene3D" id="6.20.220.10">
    <property type="entry name" value="ClpX chaperone, C4-type zinc finger domain"/>
    <property type="match status" value="1"/>
</dbReference>
<dbReference type="Gene3D" id="3.40.50.300">
    <property type="entry name" value="P-loop containing nucleotide triphosphate hydrolases"/>
    <property type="match status" value="1"/>
</dbReference>
<dbReference type="HAMAP" id="MF_00175">
    <property type="entry name" value="ClpX"/>
    <property type="match status" value="1"/>
</dbReference>
<dbReference type="InterPro" id="IPR003593">
    <property type="entry name" value="AAA+_ATPase"/>
</dbReference>
<dbReference type="InterPro" id="IPR050052">
    <property type="entry name" value="ATP-dep_Clp_protease_ClpX"/>
</dbReference>
<dbReference type="InterPro" id="IPR003959">
    <property type="entry name" value="ATPase_AAA_core"/>
</dbReference>
<dbReference type="InterPro" id="IPR019489">
    <property type="entry name" value="Clp_ATPase_C"/>
</dbReference>
<dbReference type="InterPro" id="IPR004487">
    <property type="entry name" value="Clp_protease_ATP-bd_su_ClpX"/>
</dbReference>
<dbReference type="InterPro" id="IPR046425">
    <property type="entry name" value="ClpX_bact"/>
</dbReference>
<dbReference type="InterPro" id="IPR027417">
    <property type="entry name" value="P-loop_NTPase"/>
</dbReference>
<dbReference type="InterPro" id="IPR010603">
    <property type="entry name" value="Znf_CppX_C4"/>
</dbReference>
<dbReference type="InterPro" id="IPR038366">
    <property type="entry name" value="Znf_CppX_C4_sf"/>
</dbReference>
<dbReference type="NCBIfam" id="TIGR00382">
    <property type="entry name" value="clpX"/>
    <property type="match status" value="1"/>
</dbReference>
<dbReference type="NCBIfam" id="NF003745">
    <property type="entry name" value="PRK05342.1"/>
    <property type="match status" value="1"/>
</dbReference>
<dbReference type="PANTHER" id="PTHR48102:SF7">
    <property type="entry name" value="ATP-DEPENDENT CLP PROTEASE ATP-BINDING SUBUNIT CLPX-LIKE, MITOCHONDRIAL"/>
    <property type="match status" value="1"/>
</dbReference>
<dbReference type="PANTHER" id="PTHR48102">
    <property type="entry name" value="ATP-DEPENDENT CLP PROTEASE ATP-BINDING SUBUNIT CLPX-LIKE, MITOCHONDRIAL-RELATED"/>
    <property type="match status" value="1"/>
</dbReference>
<dbReference type="Pfam" id="PF07724">
    <property type="entry name" value="AAA_2"/>
    <property type="match status" value="1"/>
</dbReference>
<dbReference type="Pfam" id="PF10431">
    <property type="entry name" value="ClpB_D2-small"/>
    <property type="match status" value="1"/>
</dbReference>
<dbReference type="Pfam" id="PF06689">
    <property type="entry name" value="zf-C4_ClpX"/>
    <property type="match status" value="1"/>
</dbReference>
<dbReference type="SMART" id="SM00382">
    <property type="entry name" value="AAA"/>
    <property type="match status" value="1"/>
</dbReference>
<dbReference type="SMART" id="SM01086">
    <property type="entry name" value="ClpB_D2-small"/>
    <property type="match status" value="1"/>
</dbReference>
<dbReference type="SMART" id="SM00994">
    <property type="entry name" value="zf-C4_ClpX"/>
    <property type="match status" value="1"/>
</dbReference>
<dbReference type="SUPFAM" id="SSF57716">
    <property type="entry name" value="Glucocorticoid receptor-like (DNA-binding domain)"/>
    <property type="match status" value="1"/>
</dbReference>
<dbReference type="SUPFAM" id="SSF52540">
    <property type="entry name" value="P-loop containing nucleoside triphosphate hydrolases"/>
    <property type="match status" value="1"/>
</dbReference>
<dbReference type="PROSITE" id="PS51902">
    <property type="entry name" value="CLPX_ZB"/>
    <property type="match status" value="1"/>
</dbReference>